<name>EDAD_MOUSE</name>
<sequence>MASPDDPLRSDHMAKEPVEDTDPSTLSFAMSDKYPIQDTGLPKAKECDTVNSNCPPNSDDQPQGEENDFPDSTKDPLSGVSRNQPCKDRKGSCSCPSCSPRAPTISDLLNDQDLLDTIRIKLDPCHPTVKNWRNFASKWGMPYDELCFLEQRPQSPTLEFLFRNSQRTVGQLMELCRLYHRADVEKILRRWVDEEWPHRGHSDSSMHF</sequence>
<comment type="function">
    <text evidence="1 4">Adapter protein that interacts with EDAR DEATH domain and couples the receptor to EDA signaling pathway during morphogenesis of ectodermal organs. Mediates the activation of NF-kappa-B (By similarity).</text>
</comment>
<comment type="subunit">
    <text evidence="1">Binds EDAR. Self-associates and binds TRAF1, TRAF2 and TRAF3 (By similarity).</text>
</comment>
<comment type="subcellular location">
    <subcellularLocation>
        <location evidence="5">Cytoplasm</location>
    </subcellularLocation>
</comment>
<comment type="developmental stage">
    <text>Detected in embryonic skin (12.5 dpc and 14.5 dpc) during the formation of hair follicles and at 15.5 dpc in the enamel knot of the developing tooth. Detected in the basal layer of the epidermis and hair follicles of P2 mice.</text>
</comment>
<accession>Q8VHX2</accession>
<dbReference type="EMBL" id="AF358671">
    <property type="protein sequence ID" value="AAL50376.1"/>
    <property type="molecule type" value="mRNA"/>
</dbReference>
<dbReference type="CCDS" id="CCDS36593.1"/>
<dbReference type="SMR" id="Q8VHX2"/>
<dbReference type="FunCoup" id="Q8VHX2">
    <property type="interactions" value="475"/>
</dbReference>
<dbReference type="STRING" id="10090.ENSMUSP00000136158"/>
<dbReference type="PhosphoSitePlus" id="Q8VHX2"/>
<dbReference type="PaxDb" id="10090-ENSMUSP00000136158"/>
<dbReference type="AGR" id="MGI:1931001"/>
<dbReference type="MGI" id="MGI:1931001">
    <property type="gene designation" value="Edaradd"/>
</dbReference>
<dbReference type="eggNOG" id="KOG4602">
    <property type="taxonomic scope" value="Eukaryota"/>
</dbReference>
<dbReference type="InParanoid" id="Q8VHX2"/>
<dbReference type="PhylomeDB" id="Q8VHX2"/>
<dbReference type="Reactome" id="R-MMU-5669034">
    <property type="pathway name" value="TNFs bind their physiological receptors"/>
</dbReference>
<dbReference type="ChiTaRS" id="Edaradd">
    <property type="organism name" value="mouse"/>
</dbReference>
<dbReference type="PRO" id="PR:Q8VHX2"/>
<dbReference type="Proteomes" id="UP000000589">
    <property type="component" value="Unplaced"/>
</dbReference>
<dbReference type="RNAct" id="Q8VHX2">
    <property type="molecule type" value="protein"/>
</dbReference>
<dbReference type="GO" id="GO:0005737">
    <property type="term" value="C:cytoplasm"/>
    <property type="evidence" value="ECO:0000303"/>
    <property type="project" value="UniProtKB"/>
</dbReference>
<dbReference type="GO" id="GO:0005123">
    <property type="term" value="F:death receptor binding"/>
    <property type="evidence" value="ECO:0000303"/>
    <property type="project" value="UniProtKB"/>
</dbReference>
<dbReference type="GO" id="GO:0007249">
    <property type="term" value="P:canonical NF-kappaB signal transduction"/>
    <property type="evidence" value="ECO:0000303"/>
    <property type="project" value="UniProtKB"/>
</dbReference>
<dbReference type="GO" id="GO:0030154">
    <property type="term" value="P:cell differentiation"/>
    <property type="evidence" value="ECO:0007669"/>
    <property type="project" value="UniProtKB-KW"/>
</dbReference>
<dbReference type="GO" id="GO:0001942">
    <property type="term" value="P:hair follicle development"/>
    <property type="evidence" value="ECO:0000316"/>
    <property type="project" value="MGI"/>
</dbReference>
<dbReference type="GO" id="GO:0042475">
    <property type="term" value="P:odontogenesis of dentin-containing tooth"/>
    <property type="evidence" value="ECO:0000315"/>
    <property type="project" value="MGI"/>
</dbReference>
<dbReference type="GO" id="GO:0061153">
    <property type="term" value="P:trachea gland development"/>
    <property type="evidence" value="ECO:0000315"/>
    <property type="project" value="MGI"/>
</dbReference>
<dbReference type="FunFam" id="1.10.533.10:FF:000065">
    <property type="entry name" value="Ectodysplasin-A receptor-associated adapter protein"/>
    <property type="match status" value="1"/>
</dbReference>
<dbReference type="Gene3D" id="1.10.533.10">
    <property type="entry name" value="Death Domain, Fas"/>
    <property type="match status" value="1"/>
</dbReference>
<dbReference type="InterPro" id="IPR011029">
    <property type="entry name" value="DEATH-like_dom_sf"/>
</dbReference>
<dbReference type="InterPro" id="IPR000488">
    <property type="entry name" value="Death_dom"/>
</dbReference>
<dbReference type="InterPro" id="IPR039200">
    <property type="entry name" value="EDARADD"/>
</dbReference>
<dbReference type="PANTHER" id="PTHR28469">
    <property type="entry name" value="ECTODYSPLASIN-A RECEPTOR-ASSOCIATED ADAPTER PROTEIN"/>
    <property type="match status" value="1"/>
</dbReference>
<dbReference type="PANTHER" id="PTHR28469:SF1">
    <property type="entry name" value="ECTODYSPLASIN-A RECEPTOR-ASSOCIATED ADAPTER PROTEIN"/>
    <property type="match status" value="1"/>
</dbReference>
<dbReference type="Pfam" id="PF00531">
    <property type="entry name" value="Death"/>
    <property type="match status" value="1"/>
</dbReference>
<dbReference type="SUPFAM" id="SSF47986">
    <property type="entry name" value="DEATH domain"/>
    <property type="match status" value="1"/>
</dbReference>
<feature type="chain" id="PRO_0000086930" description="Ectodysplasin-A receptor-associated adapter protein">
    <location>
        <begin position="1"/>
        <end position="208"/>
    </location>
</feature>
<feature type="domain" description="Death">
    <location>
        <begin position="116"/>
        <end position="195"/>
    </location>
</feature>
<feature type="region of interest" description="Disordered" evidence="2">
    <location>
        <begin position="1"/>
        <end position="99"/>
    </location>
</feature>
<feature type="compositionally biased region" description="Basic and acidic residues" evidence="2">
    <location>
        <begin position="1"/>
        <end position="18"/>
    </location>
</feature>
<feature type="compositionally biased region" description="Polar residues" evidence="2">
    <location>
        <begin position="49"/>
        <end position="61"/>
    </location>
</feature>
<feature type="mutagenesis site" description="Reduces binding to EDAR." evidence="3">
    <original>E</original>
    <variation>K</variation>
    <location>
        <position position="145"/>
    </location>
</feature>
<feature type="sequence conflict" description="In Ref. 2." evidence="5" ref="2">
    <original>R</original>
    <variation>G</variation>
    <location>
        <position position="89"/>
    </location>
</feature>
<protein>
    <recommendedName>
        <fullName>Ectodysplasin-A receptor-associated adapter protein</fullName>
    </recommendedName>
    <alternativeName>
        <fullName>EDAR-associated death domain protein</fullName>
    </alternativeName>
    <alternativeName>
        <fullName>Protein crinkled</fullName>
    </alternativeName>
</protein>
<gene>
    <name type="primary">Edaradd</name>
    <name type="synonym">Cr</name>
</gene>
<keyword id="KW-0963">Cytoplasm</keyword>
<keyword id="KW-0217">Developmental protein</keyword>
<keyword id="KW-0221">Differentiation</keyword>
<keyword id="KW-1185">Reference proteome</keyword>
<reference key="1">
    <citation type="journal article" date="2001" name="Nature">
        <title>Gene defect in ectodermal dysplasia implicates a DEATH domain adapter in development.</title>
        <authorList>
            <person name="Headon D.J."/>
            <person name="Emmal S.A."/>
            <person name="Ferguson B.M."/>
            <person name="Tucker A.S."/>
            <person name="Justice M.J."/>
            <person name="Sharpe P.T."/>
            <person name="Zonana J."/>
            <person name="Overbeek P.A."/>
        </authorList>
    </citation>
    <scope>NUCLEOTIDE SEQUENCE [MRNA]</scope>
    <scope>MUTAGENESIS OF GLU-145</scope>
    <source>
        <strain>FVB/N</strain>
        <tissue>Skin</tissue>
    </source>
</reference>
<reference key="2">
    <citation type="journal article" date="2002" name="Curr. Biol.">
        <title>Identification of a novel DEATH domain-containing adaptor molecule for ectodysplasin-A receptor that is mutated in crinkled mice.</title>
        <authorList>
            <person name="Yan M."/>
            <person name="Zhang Z."/>
            <person name="Brady J.R."/>
            <person name="Schilbach S."/>
            <person name="Fairbrother W.J."/>
            <person name="Dixit V.M."/>
        </authorList>
    </citation>
    <scope>NUCLEOTIDE SEQUENCE [MRNA]</scope>
    <scope>FUNCTION</scope>
    <source>
        <tissue>Skin</tissue>
    </source>
</reference>
<organism>
    <name type="scientific">Mus musculus</name>
    <name type="common">Mouse</name>
    <dbReference type="NCBI Taxonomy" id="10090"/>
    <lineage>
        <taxon>Eukaryota</taxon>
        <taxon>Metazoa</taxon>
        <taxon>Chordata</taxon>
        <taxon>Craniata</taxon>
        <taxon>Vertebrata</taxon>
        <taxon>Euteleostomi</taxon>
        <taxon>Mammalia</taxon>
        <taxon>Eutheria</taxon>
        <taxon>Euarchontoglires</taxon>
        <taxon>Glires</taxon>
        <taxon>Rodentia</taxon>
        <taxon>Myomorpha</taxon>
        <taxon>Muroidea</taxon>
        <taxon>Muridae</taxon>
        <taxon>Murinae</taxon>
        <taxon>Mus</taxon>
        <taxon>Mus</taxon>
    </lineage>
</organism>
<evidence type="ECO:0000250" key="1"/>
<evidence type="ECO:0000256" key="2">
    <source>
        <dbReference type="SAM" id="MobiDB-lite"/>
    </source>
</evidence>
<evidence type="ECO:0000269" key="3">
    <source>
    </source>
</evidence>
<evidence type="ECO:0000269" key="4">
    <source>
    </source>
</evidence>
<evidence type="ECO:0000305" key="5"/>
<proteinExistence type="evidence at protein level"/>